<name>RL34_NEIMA</name>
<gene>
    <name type="primary">rpmH</name>
    <name type="ordered locus">NMA0551</name>
</gene>
<keyword id="KW-0687">Ribonucleoprotein</keyword>
<keyword id="KW-0689">Ribosomal protein</keyword>
<proteinExistence type="inferred from homology"/>
<protein>
    <recommendedName>
        <fullName evidence="2">Large ribosomal subunit protein bL34</fullName>
    </recommendedName>
    <alternativeName>
        <fullName>50S ribosomal protein L34</fullName>
    </alternativeName>
</protein>
<dbReference type="EMBL" id="AL157959">
    <property type="protein sequence ID" value="CAM07827.1"/>
    <property type="molecule type" value="Genomic_DNA"/>
</dbReference>
<dbReference type="RefSeq" id="WP_002214728.1">
    <property type="nucleotide sequence ID" value="NC_003116.1"/>
</dbReference>
<dbReference type="SMR" id="P66250"/>
<dbReference type="EnsemblBacteria" id="CAM07827">
    <property type="protein sequence ID" value="CAM07827"/>
    <property type="gene ID" value="NMA0551"/>
</dbReference>
<dbReference type="GeneID" id="94582113"/>
<dbReference type="KEGG" id="nma:NMA0551"/>
<dbReference type="HOGENOM" id="CLU_129938_2_0_4"/>
<dbReference type="Proteomes" id="UP000000626">
    <property type="component" value="Chromosome"/>
</dbReference>
<dbReference type="GO" id="GO:1990904">
    <property type="term" value="C:ribonucleoprotein complex"/>
    <property type="evidence" value="ECO:0007669"/>
    <property type="project" value="UniProtKB-KW"/>
</dbReference>
<dbReference type="GO" id="GO:0005840">
    <property type="term" value="C:ribosome"/>
    <property type="evidence" value="ECO:0007669"/>
    <property type="project" value="UniProtKB-KW"/>
</dbReference>
<dbReference type="GO" id="GO:0003735">
    <property type="term" value="F:structural constituent of ribosome"/>
    <property type="evidence" value="ECO:0007669"/>
    <property type="project" value="InterPro"/>
</dbReference>
<dbReference type="GO" id="GO:0006412">
    <property type="term" value="P:translation"/>
    <property type="evidence" value="ECO:0007669"/>
    <property type="project" value="UniProtKB-UniRule"/>
</dbReference>
<dbReference type="FunFam" id="1.10.287.3980:FF:000001">
    <property type="entry name" value="Mitochondrial ribosomal protein L34"/>
    <property type="match status" value="1"/>
</dbReference>
<dbReference type="Gene3D" id="1.10.287.3980">
    <property type="match status" value="1"/>
</dbReference>
<dbReference type="HAMAP" id="MF_00391">
    <property type="entry name" value="Ribosomal_bL34"/>
    <property type="match status" value="1"/>
</dbReference>
<dbReference type="InterPro" id="IPR000271">
    <property type="entry name" value="Ribosomal_bL34"/>
</dbReference>
<dbReference type="InterPro" id="IPR020939">
    <property type="entry name" value="Ribosomal_bL34_CS"/>
</dbReference>
<dbReference type="NCBIfam" id="TIGR01030">
    <property type="entry name" value="rpmH_bact"/>
    <property type="match status" value="1"/>
</dbReference>
<dbReference type="PANTHER" id="PTHR14503:SF4">
    <property type="entry name" value="LARGE RIBOSOMAL SUBUNIT PROTEIN BL34M"/>
    <property type="match status" value="1"/>
</dbReference>
<dbReference type="PANTHER" id="PTHR14503">
    <property type="entry name" value="MITOCHONDRIAL RIBOSOMAL PROTEIN 34 FAMILY MEMBER"/>
    <property type="match status" value="1"/>
</dbReference>
<dbReference type="Pfam" id="PF00468">
    <property type="entry name" value="Ribosomal_L34"/>
    <property type="match status" value="1"/>
</dbReference>
<dbReference type="PROSITE" id="PS00784">
    <property type="entry name" value="RIBOSOMAL_L34"/>
    <property type="match status" value="1"/>
</dbReference>
<sequence length="44" mass="5051">MKRTYQPSVTKRKRTHGFLVRSKTRGGRAVLAARRAKGRKRLAV</sequence>
<evidence type="ECO:0000256" key="1">
    <source>
        <dbReference type="SAM" id="MobiDB-lite"/>
    </source>
</evidence>
<evidence type="ECO:0000305" key="2"/>
<comment type="similarity">
    <text evidence="2">Belongs to the bacterial ribosomal protein bL34 family.</text>
</comment>
<reference key="1">
    <citation type="journal article" date="2000" name="Nature">
        <title>Complete DNA sequence of a serogroup A strain of Neisseria meningitidis Z2491.</title>
        <authorList>
            <person name="Parkhill J."/>
            <person name="Achtman M."/>
            <person name="James K.D."/>
            <person name="Bentley S.D."/>
            <person name="Churcher C.M."/>
            <person name="Klee S.R."/>
            <person name="Morelli G."/>
            <person name="Basham D."/>
            <person name="Brown D."/>
            <person name="Chillingworth T."/>
            <person name="Davies R.M."/>
            <person name="Davis P."/>
            <person name="Devlin K."/>
            <person name="Feltwell T."/>
            <person name="Hamlin N."/>
            <person name="Holroyd S."/>
            <person name="Jagels K."/>
            <person name="Leather S."/>
            <person name="Moule S."/>
            <person name="Mungall K.L."/>
            <person name="Quail M.A."/>
            <person name="Rajandream M.A."/>
            <person name="Rutherford K.M."/>
            <person name="Simmonds M."/>
            <person name="Skelton J."/>
            <person name="Whitehead S."/>
            <person name="Spratt B.G."/>
            <person name="Barrell B.G."/>
        </authorList>
    </citation>
    <scope>NUCLEOTIDE SEQUENCE [LARGE SCALE GENOMIC DNA]</scope>
    <source>
        <strain>DSM 15465 / Z2491</strain>
    </source>
</reference>
<organism>
    <name type="scientific">Neisseria meningitidis serogroup A / serotype 4A (strain DSM 15465 / Z2491)</name>
    <dbReference type="NCBI Taxonomy" id="122587"/>
    <lineage>
        <taxon>Bacteria</taxon>
        <taxon>Pseudomonadati</taxon>
        <taxon>Pseudomonadota</taxon>
        <taxon>Betaproteobacteria</taxon>
        <taxon>Neisseriales</taxon>
        <taxon>Neisseriaceae</taxon>
        <taxon>Neisseria</taxon>
    </lineage>
</organism>
<accession>P66250</accession>
<accession>A1IQ02</accession>
<accession>Q9JRA1</accession>
<feature type="chain" id="PRO_0000187426" description="Large ribosomal subunit protein bL34">
    <location>
        <begin position="1"/>
        <end position="44"/>
    </location>
</feature>
<feature type="region of interest" description="Disordered" evidence="1">
    <location>
        <begin position="24"/>
        <end position="44"/>
    </location>
</feature>
<feature type="compositionally biased region" description="Basic residues" evidence="1">
    <location>
        <begin position="34"/>
        <end position="44"/>
    </location>
</feature>